<evidence type="ECO:0000250" key="1"/>
<evidence type="ECO:0000250" key="2">
    <source>
        <dbReference type="UniProtKB" id="P08123"/>
    </source>
</evidence>
<evidence type="ECO:0000250" key="3">
    <source>
        <dbReference type="UniProtKB" id="Q03692"/>
    </source>
</evidence>
<evidence type="ECO:0000255" key="4">
    <source>
        <dbReference type="PROSITE-ProRule" id="PRU00793"/>
    </source>
</evidence>
<evidence type="ECO:0000256" key="5">
    <source>
        <dbReference type="SAM" id="MobiDB-lite"/>
    </source>
</evidence>
<name>CO1A2_CANLF</name>
<proteinExistence type="evidence at transcript level"/>
<dbReference type="EMBL" id="AF035120">
    <property type="protein sequence ID" value="AAC64485.1"/>
    <property type="molecule type" value="mRNA"/>
</dbReference>
<dbReference type="RefSeq" id="NP_001003187.1">
    <property type="nucleotide sequence ID" value="NM_001003187.1"/>
</dbReference>
<dbReference type="ComplexPortal" id="CPX-3103">
    <property type="entry name" value="Collagen type I trimer"/>
</dbReference>
<dbReference type="FunCoup" id="O46392">
    <property type="interactions" value="159"/>
</dbReference>
<dbReference type="STRING" id="9615.ENSCAFP00000029400"/>
<dbReference type="GlyCosmos" id="O46392">
    <property type="glycosylation" value="1 site, No reported glycans"/>
</dbReference>
<dbReference type="PaxDb" id="9612-ENSCAFP00000029400"/>
<dbReference type="GeneID" id="403824"/>
<dbReference type="KEGG" id="cfa:403824"/>
<dbReference type="CTD" id="1278"/>
<dbReference type="eggNOG" id="KOG3544">
    <property type="taxonomic scope" value="Eukaryota"/>
</dbReference>
<dbReference type="InParanoid" id="O46392"/>
<dbReference type="OrthoDB" id="8939548at2759"/>
<dbReference type="Proteomes" id="UP000002254">
    <property type="component" value="Unplaced"/>
</dbReference>
<dbReference type="Proteomes" id="UP000694429">
    <property type="component" value="Unplaced"/>
</dbReference>
<dbReference type="Proteomes" id="UP000694542">
    <property type="component" value="Unplaced"/>
</dbReference>
<dbReference type="Proteomes" id="UP000805418">
    <property type="component" value="Unplaced"/>
</dbReference>
<dbReference type="GO" id="GO:0005584">
    <property type="term" value="C:collagen type I trimer"/>
    <property type="evidence" value="ECO:0000318"/>
    <property type="project" value="GO_Central"/>
</dbReference>
<dbReference type="GO" id="GO:0062023">
    <property type="term" value="C:collagen-containing extracellular matrix"/>
    <property type="evidence" value="ECO:0000318"/>
    <property type="project" value="GO_Central"/>
</dbReference>
<dbReference type="GO" id="GO:0005615">
    <property type="term" value="C:extracellular space"/>
    <property type="evidence" value="ECO:0000318"/>
    <property type="project" value="GO_Central"/>
</dbReference>
<dbReference type="GO" id="GO:0030020">
    <property type="term" value="F:extracellular matrix structural constituent conferring tensile strength"/>
    <property type="evidence" value="ECO:0000318"/>
    <property type="project" value="GO_Central"/>
</dbReference>
<dbReference type="GO" id="GO:0046872">
    <property type="term" value="F:metal ion binding"/>
    <property type="evidence" value="ECO:0007669"/>
    <property type="project" value="UniProtKB-KW"/>
</dbReference>
<dbReference type="FunFam" id="2.60.120.1000:FF:000001">
    <property type="entry name" value="Collagen alpha-1 type I chain"/>
    <property type="match status" value="1"/>
</dbReference>
<dbReference type="Gene3D" id="2.60.120.1000">
    <property type="match status" value="1"/>
</dbReference>
<dbReference type="InterPro" id="IPR008160">
    <property type="entry name" value="Collagen"/>
</dbReference>
<dbReference type="InterPro" id="IPR050149">
    <property type="entry name" value="Collagen_superfamily"/>
</dbReference>
<dbReference type="InterPro" id="IPR000885">
    <property type="entry name" value="Fib_collagen_C"/>
</dbReference>
<dbReference type="PANTHER" id="PTHR24023">
    <property type="entry name" value="COLLAGEN ALPHA"/>
    <property type="match status" value="1"/>
</dbReference>
<dbReference type="PANTHER" id="PTHR24023:SF1082">
    <property type="entry name" value="COLLAGEN TRIPLE HELIX REPEAT"/>
    <property type="match status" value="1"/>
</dbReference>
<dbReference type="Pfam" id="PF01410">
    <property type="entry name" value="COLFI"/>
    <property type="match status" value="1"/>
</dbReference>
<dbReference type="Pfam" id="PF01391">
    <property type="entry name" value="Collagen"/>
    <property type="match status" value="7"/>
</dbReference>
<dbReference type="SMART" id="SM00038">
    <property type="entry name" value="COLFI"/>
    <property type="match status" value="1"/>
</dbReference>
<dbReference type="PROSITE" id="PS51461">
    <property type="entry name" value="NC1_FIB"/>
    <property type="match status" value="1"/>
</dbReference>
<keyword id="KW-0106">Calcium</keyword>
<keyword id="KW-0176">Collagen</keyword>
<keyword id="KW-1015">Disulfide bond</keyword>
<keyword id="KW-0272">Extracellular matrix</keyword>
<keyword id="KW-0325">Glycoprotein</keyword>
<keyword id="KW-0379">Hydroxylation</keyword>
<keyword id="KW-0479">Metal-binding</keyword>
<keyword id="KW-0873">Pyrrolidone carboxylic acid</keyword>
<keyword id="KW-1185">Reference proteome</keyword>
<keyword id="KW-0677">Repeat</keyword>
<keyword id="KW-0964">Secreted</keyword>
<keyword id="KW-0732">Signal</keyword>
<organism>
    <name type="scientific">Canis lupus familiaris</name>
    <name type="common">Dog</name>
    <name type="synonym">Canis familiaris</name>
    <dbReference type="NCBI Taxonomy" id="9615"/>
    <lineage>
        <taxon>Eukaryota</taxon>
        <taxon>Metazoa</taxon>
        <taxon>Chordata</taxon>
        <taxon>Craniata</taxon>
        <taxon>Vertebrata</taxon>
        <taxon>Euteleostomi</taxon>
        <taxon>Mammalia</taxon>
        <taxon>Eutheria</taxon>
        <taxon>Laurasiatheria</taxon>
        <taxon>Carnivora</taxon>
        <taxon>Caniformia</taxon>
        <taxon>Canidae</taxon>
        <taxon>Canis</taxon>
    </lineage>
</organism>
<reference key="1">
    <citation type="journal article" date="1998" name="Arch. Biochem. Biophys.">
        <title>Sequence of canine COL1A2 cDNA: nucleotide substitutions affecting the cyanogen bromide peptide map of the alpha 2(I) chain.</title>
        <authorList>
            <person name="Campbell B.G."/>
            <person name="Wootton J.A.M."/>
            <person name="MacLeod J.N."/>
            <person name="Minor R.R."/>
        </authorList>
    </citation>
    <scope>NUCLEOTIDE SEQUENCE [MRNA]</scope>
    <source>
        <tissue>Skin</tissue>
    </source>
</reference>
<accession>O46392</accession>
<comment type="function">
    <text>Type I collagen is a member of group I collagen (fibrillar forming collagen).</text>
</comment>
<comment type="subunit">
    <text evidence="2">Trimers of one alpha 2(I) and two alpha 1(I) chains. Interacts (via C-terminus) with TMEM131 (via PapD-L domain); the interaction is direct and is involved in assembly and TRAPPIII ER-to-Golgi transport complex-dependent secretion of collagen.</text>
</comment>
<comment type="subcellular location">
    <subcellularLocation>
        <location evidence="4">Secreted</location>
        <location evidence="4">Extracellular space</location>
        <location evidence="4">Extracellular matrix</location>
    </subcellularLocation>
</comment>
<comment type="tissue specificity">
    <text>Forms the fibrils of tendon, ligaments and bones. In bones the fibrils are mineralized with calcium hydroxyapatite.</text>
</comment>
<comment type="domain">
    <text evidence="1">The C-terminal propeptide, also known as COLFI domain, have crucial roles in tissue growth and repair by controlling both the intracellular assembly of procollagen molecules and the extracellular assembly of collagen fibrils. It binds a calcium ion which is essential for its function.</text>
</comment>
<comment type="PTM">
    <text>Prolines at the third position of the tripeptide repeating unit (G-X-Y) are hydroxylated in some or all of the chains.</text>
</comment>
<comment type="similarity">
    <text evidence="4">Belongs to the fibrillar collagen family.</text>
</comment>
<gene>
    <name type="primary">COL1A2</name>
</gene>
<protein>
    <recommendedName>
        <fullName>Collagen alpha-2(I) chain</fullName>
    </recommendedName>
    <alternativeName>
        <fullName>Alpha-2 type I collagen</fullName>
    </alternativeName>
</protein>
<feature type="signal peptide" evidence="2">
    <location>
        <begin position="1"/>
        <end position="22"/>
    </location>
</feature>
<feature type="propeptide" id="PRO_0000005801" description="N-terminal propeptide" evidence="2">
    <location>
        <begin position="23"/>
        <end position="79"/>
    </location>
</feature>
<feature type="chain" id="PRO_0000005802" description="Collagen alpha-2(I) chain">
    <location>
        <begin position="80"/>
        <end position="1119"/>
    </location>
</feature>
<feature type="propeptide" id="PRO_0000005803" description="C-terminal propeptide">
    <location>
        <begin position="1120"/>
        <end position="1366"/>
    </location>
</feature>
<feature type="domain" description="Fibrillar collagen NC1" evidence="4">
    <location>
        <begin position="1133"/>
        <end position="1366"/>
    </location>
</feature>
<feature type="region of interest" description="Disordered" evidence="5">
    <location>
        <begin position="27"/>
        <end position="1131"/>
    </location>
</feature>
<feature type="compositionally biased region" description="Basic and acidic residues" evidence="5">
    <location>
        <begin position="34"/>
        <end position="44"/>
    </location>
</feature>
<feature type="compositionally biased region" description="Pro residues" evidence="5">
    <location>
        <begin position="59"/>
        <end position="71"/>
    </location>
</feature>
<feature type="compositionally biased region" description="Gly residues" evidence="5">
    <location>
        <begin position="84"/>
        <end position="94"/>
    </location>
</feature>
<feature type="compositionally biased region" description="Low complexity" evidence="5">
    <location>
        <begin position="95"/>
        <end position="132"/>
    </location>
</feature>
<feature type="compositionally biased region" description="Basic and acidic residues" evidence="5">
    <location>
        <begin position="141"/>
        <end position="155"/>
    </location>
</feature>
<feature type="compositionally biased region" description="Low complexity" evidence="5">
    <location>
        <begin position="225"/>
        <end position="254"/>
    </location>
</feature>
<feature type="compositionally biased region" description="Low complexity" evidence="5">
    <location>
        <begin position="279"/>
        <end position="293"/>
    </location>
</feature>
<feature type="compositionally biased region" description="Low complexity" evidence="5">
    <location>
        <begin position="300"/>
        <end position="321"/>
    </location>
</feature>
<feature type="compositionally biased region" description="Low complexity" evidence="5">
    <location>
        <begin position="330"/>
        <end position="345"/>
    </location>
</feature>
<feature type="compositionally biased region" description="Low complexity" evidence="5">
    <location>
        <begin position="384"/>
        <end position="408"/>
    </location>
</feature>
<feature type="compositionally biased region" description="Low complexity" evidence="5">
    <location>
        <begin position="423"/>
        <end position="434"/>
    </location>
</feature>
<feature type="compositionally biased region" description="Low complexity" evidence="5">
    <location>
        <begin position="470"/>
        <end position="489"/>
    </location>
</feature>
<feature type="compositionally biased region" description="Low complexity" evidence="5">
    <location>
        <begin position="513"/>
        <end position="531"/>
    </location>
</feature>
<feature type="compositionally biased region" description="Gly residues" evidence="5">
    <location>
        <begin position="538"/>
        <end position="547"/>
    </location>
</feature>
<feature type="compositionally biased region" description="Low complexity" evidence="5">
    <location>
        <begin position="594"/>
        <end position="611"/>
    </location>
</feature>
<feature type="compositionally biased region" description="Gly residues" evidence="5">
    <location>
        <begin position="634"/>
        <end position="643"/>
    </location>
</feature>
<feature type="compositionally biased region" description="Low complexity" evidence="5">
    <location>
        <begin position="668"/>
        <end position="690"/>
    </location>
</feature>
<feature type="compositionally biased region" description="Low complexity" evidence="5">
    <location>
        <begin position="717"/>
        <end position="737"/>
    </location>
</feature>
<feature type="compositionally biased region" description="Basic and acidic residues" evidence="5">
    <location>
        <begin position="738"/>
        <end position="747"/>
    </location>
</feature>
<feature type="compositionally biased region" description="Low complexity" evidence="5">
    <location>
        <begin position="756"/>
        <end position="765"/>
    </location>
</feature>
<feature type="compositionally biased region" description="Gly residues" evidence="5">
    <location>
        <begin position="775"/>
        <end position="784"/>
    </location>
</feature>
<feature type="compositionally biased region" description="Low complexity" evidence="5">
    <location>
        <begin position="785"/>
        <end position="795"/>
    </location>
</feature>
<feature type="compositionally biased region" description="Low complexity" evidence="5">
    <location>
        <begin position="863"/>
        <end position="876"/>
    </location>
</feature>
<feature type="compositionally biased region" description="Low complexity" evidence="5">
    <location>
        <begin position="893"/>
        <end position="932"/>
    </location>
</feature>
<feature type="compositionally biased region" description="Low complexity" evidence="5">
    <location>
        <begin position="951"/>
        <end position="974"/>
    </location>
</feature>
<feature type="compositionally biased region" description="Low complexity" evidence="5">
    <location>
        <begin position="981"/>
        <end position="1001"/>
    </location>
</feature>
<feature type="compositionally biased region" description="Basic and acidic residues" evidence="5">
    <location>
        <begin position="1005"/>
        <end position="1016"/>
    </location>
</feature>
<feature type="compositionally biased region" description="Pro residues" evidence="5">
    <location>
        <begin position="1089"/>
        <end position="1103"/>
    </location>
</feature>
<feature type="binding site" evidence="3">
    <location>
        <position position="1181"/>
    </location>
    <ligand>
        <name>Ca(2+)</name>
        <dbReference type="ChEBI" id="CHEBI:29108"/>
    </ligand>
</feature>
<feature type="binding site" evidence="3">
    <location>
        <position position="1183"/>
    </location>
    <ligand>
        <name>Ca(2+)</name>
        <dbReference type="ChEBI" id="CHEBI:29108"/>
    </ligand>
</feature>
<feature type="binding site" evidence="3">
    <location>
        <position position="1184"/>
    </location>
    <ligand>
        <name>Ca(2+)</name>
        <dbReference type="ChEBI" id="CHEBI:29108"/>
    </ligand>
</feature>
<feature type="binding site" evidence="3">
    <location>
        <position position="1186"/>
    </location>
    <ligand>
        <name>Ca(2+)</name>
        <dbReference type="ChEBI" id="CHEBI:29108"/>
    </ligand>
</feature>
<feature type="binding site" evidence="3">
    <location>
        <position position="1189"/>
    </location>
    <ligand>
        <name>Ca(2+)</name>
        <dbReference type="ChEBI" id="CHEBI:29108"/>
    </ligand>
</feature>
<feature type="modified residue" description="Pyrrolidone carboxylic acid" evidence="2">
    <location>
        <position position="23"/>
    </location>
</feature>
<feature type="modified residue" description="Allysine" evidence="2">
    <location>
        <position position="84"/>
    </location>
</feature>
<feature type="modified residue" description="5-hydroxylysine; alternate" evidence="2">
    <location>
        <position position="177"/>
    </location>
</feature>
<feature type="glycosylation site" description="O-linked (Gal...) hydroxylysine; alternate" evidence="2">
    <location>
        <position position="177"/>
    </location>
</feature>
<feature type="disulfide bond" evidence="4">
    <location>
        <begin position="1163"/>
        <end position="1195"/>
    </location>
</feature>
<feature type="disulfide bond" evidence="4">
    <location>
        <begin position="1203"/>
        <end position="1364"/>
    </location>
</feature>
<feature type="disulfide bond" evidence="4">
    <location>
        <begin position="1272"/>
        <end position="1317"/>
    </location>
</feature>
<sequence length="1366" mass="129400">MLSFVDTRTLLLLAVTSCLATCQSLQEATARKGPTGDRGPRGERGPPGPPGRDGDDGIPGPPGPPGPPGPPGLGGNFAAQYDGKGVGLGPGPMGLMGPRGPPGASGAPGPQGFQGPAGEPGEPGQTGPAGARGPPGPPGKAGEDGHPGKPGRPGERGVVGPQGARGFPGTPGLPGFKGIRGHNGLDGLKGQPGAPGVKGEPGAPGENGTPGQTGARGLPGERGRVGAPGPAGARGSDGSVGPVGPAGPIGSAGPPGFPGAPGPKGEIGPVGNPGPAGPAGPRGEVGLPGVSGPVGPPGNPGANGLTGAKGAAGLPGVAGAPGLPGPRGIPGPVGAAGATGARGIVGEPGPAGSKGESGNKGEPGSAGAQGPPGPSGEEGKRGPNGEAGSAGPSGPPGLRGSPGSRGLPGADGPAGVMGPPGPRGATGPAGVRGPNGDSGRPGEPGLMGPRGFPGAPGNVGPAGKEGPMGLPGIDGRPGPIGPAGARGEPGNIGFPGPKGPTGDPGKNGDKGHAGLAGARGAPGPDGNNGAQGPPGPQGVQGGKGEQGPAGPPGFQGLPGPAGTAGEVGKPGERGLPGEFGLPGPAGPRGERGPPGESGAAGPSGPIGSRGPSGPPGPDGNKGEPGVLGAPGTAGASGPGGLPGERGAAGIPGGKGEKGETGLRGEIGNPGRDGARGAPGAMGAPGPAGATGDRGEAGPAGPAGPAGPRGTPGERGEVGPAGPNGFAGPAGAAGQPGAKGERGTKGPKGENGPVGPTGPIGSAGPSGPNGPPGPAGSRGDGGPPGATGFPGAAGRTGPPGPSGITGPPGPPGAAGKEGLRGPRGDQGPVGRTGETGASGPPGFTGEKGPSGEPGTAGPPGTPGPQGLLGAPGILGLPGSRGERGLPGVAGSVGEPGPLGIAGPPGARGPPGAVGAPGVNGAPGEAGRDGNPGNDGPPGRDGQAGHKGERGYPGNIGPVGAVGAPGPHGPVGPTGKHGNRGEPGPAGSVGPVGAVGPRGPSGPQGIRGDKGEPGEKGPRGLPGLKGHNGLQGLPGLAGQHGDQGAPGSVGPAGPRGPAGPSGPAGKDGRTGQPGTVGPAGIRGSQGSQGPAGPPGPPGPPGPPGPSGGGYDFGYEGDFYRADQPRSPPSLRPKDYEVDATLKSLNNQIETLLTPEGSRKNPARTCRDLRLSHPEWSSGYYWIDPNQGCTMDAIKVYCDFSTGETCIRAQPENIPAKNWYRNSKVKKHIWLGETINGGTQFEYNVEGVTTKEMATQLAFMRLLANHASQNITYHCKNSIAYMDEETGNLKKAVILQGSNDVELVAEGNSRFTYTVLVDGCSKKTNEWRKTIIEYKTNKPSRLPILDIAPLDIGDADQEFRVDVGPVCFK</sequence>